<keyword id="KW-0963">Cytoplasm</keyword>
<keyword id="KW-0808">Transferase</keyword>
<name>CAIB_ECOL5</name>
<organism>
    <name type="scientific">Escherichia coli O6:K15:H31 (strain 536 / UPEC)</name>
    <dbReference type="NCBI Taxonomy" id="362663"/>
    <lineage>
        <taxon>Bacteria</taxon>
        <taxon>Pseudomonadati</taxon>
        <taxon>Pseudomonadota</taxon>
        <taxon>Gammaproteobacteria</taxon>
        <taxon>Enterobacterales</taxon>
        <taxon>Enterobacteriaceae</taxon>
        <taxon>Escherichia</taxon>
    </lineage>
</organism>
<feature type="chain" id="PRO_0000300980" description="L-carnitine CoA-transferase">
    <location>
        <begin position="1"/>
        <end position="405"/>
    </location>
</feature>
<feature type="active site" description="Nucleophile" evidence="1">
    <location>
        <position position="169"/>
    </location>
</feature>
<feature type="binding site" evidence="1">
    <location>
        <position position="97"/>
    </location>
    <ligand>
        <name>CoA</name>
        <dbReference type="ChEBI" id="CHEBI:57287"/>
    </ligand>
</feature>
<feature type="binding site" evidence="1">
    <location>
        <position position="104"/>
    </location>
    <ligand>
        <name>CoA</name>
        <dbReference type="ChEBI" id="CHEBI:57287"/>
    </ligand>
</feature>
<accession>Q0TLV1</accession>
<sequence>MDHLPMPKFGPLAGLRVVFSGIEIAGPFAGQMFAEWGAEVIWIENVAWADTIRVQPNYPQLSRRNLHALSLNIFKDEGREAFLKLMETTDIFIEASKGPAFARRGITDEVLWQHNPKLVIAHLSGFGQYGTEEYTNLPAYNTIAQAFSGYLIQNGDVDQPMPAFPYTADYFSGLTATTAALAALHKVRETGKGESIDIAMYEVMLRMGQYFMMDYFNGGEMCPRMTKGKDPYYAGCGLYKCADGYIVMELVGITQITECFKDIGLAHLLGTPEIPEGTQLIHRIECPYGPLVEEKLDAWLAAHTIAEVKERFAELNIACAKVLTVPELESNPQYVARESITQWQTMDGRTCKGPNIMPKFKNNPGQIWRGMPSHGMDTAAILKNIGYSENDIQELVSKGLAKVED</sequence>
<evidence type="ECO:0000255" key="1">
    <source>
        <dbReference type="HAMAP-Rule" id="MF_01050"/>
    </source>
</evidence>
<reference key="1">
    <citation type="journal article" date="2006" name="Mol. Microbiol.">
        <title>Role of pathogenicity island-associated integrases in the genome plasticity of uropathogenic Escherichia coli strain 536.</title>
        <authorList>
            <person name="Hochhut B."/>
            <person name="Wilde C."/>
            <person name="Balling G."/>
            <person name="Middendorf B."/>
            <person name="Dobrindt U."/>
            <person name="Brzuszkiewicz E."/>
            <person name="Gottschalk G."/>
            <person name="Carniel E."/>
            <person name="Hacker J."/>
        </authorList>
    </citation>
    <scope>NUCLEOTIDE SEQUENCE [LARGE SCALE GENOMIC DNA]</scope>
    <source>
        <strain>536 / UPEC</strain>
    </source>
</reference>
<dbReference type="EC" id="2.8.3.21" evidence="1"/>
<dbReference type="EMBL" id="CP000247">
    <property type="protein sequence ID" value="ABG68080.1"/>
    <property type="molecule type" value="Genomic_DNA"/>
</dbReference>
<dbReference type="RefSeq" id="WP_000349956.1">
    <property type="nucleotide sequence ID" value="NC_008253.1"/>
</dbReference>
<dbReference type="SMR" id="Q0TLV1"/>
<dbReference type="KEGG" id="ecp:ECP_0038"/>
<dbReference type="HOGENOM" id="CLU_033975_2_0_6"/>
<dbReference type="UniPathway" id="UPA00117"/>
<dbReference type="Proteomes" id="UP000009182">
    <property type="component" value="Chromosome"/>
</dbReference>
<dbReference type="GO" id="GO:0005737">
    <property type="term" value="C:cytoplasm"/>
    <property type="evidence" value="ECO:0007669"/>
    <property type="project" value="UniProtKB-SubCell"/>
</dbReference>
<dbReference type="GO" id="GO:0008735">
    <property type="term" value="F:L-carnitine CoA-transferase activity"/>
    <property type="evidence" value="ECO:0007669"/>
    <property type="project" value="RHEA"/>
</dbReference>
<dbReference type="GO" id="GO:0009437">
    <property type="term" value="P:carnitine metabolic process"/>
    <property type="evidence" value="ECO:0007669"/>
    <property type="project" value="UniProtKB-UniRule"/>
</dbReference>
<dbReference type="FunFam" id="3.30.1540.10:FF:000001">
    <property type="entry name" value="L-carnitine CoA-transferase"/>
    <property type="match status" value="1"/>
</dbReference>
<dbReference type="Gene3D" id="3.40.50.10540">
    <property type="entry name" value="Crotonobetainyl-coa:carnitine coa-transferase, domain 1"/>
    <property type="match status" value="1"/>
</dbReference>
<dbReference type="Gene3D" id="3.30.1540.10">
    <property type="entry name" value="formyl-coa transferase, domain 3"/>
    <property type="match status" value="1"/>
</dbReference>
<dbReference type="HAMAP" id="MF_01050">
    <property type="entry name" value="CaiB"/>
    <property type="match status" value="1"/>
</dbReference>
<dbReference type="InterPro" id="IPR050509">
    <property type="entry name" value="CoA-transferase_III"/>
</dbReference>
<dbReference type="InterPro" id="IPR023452">
    <property type="entry name" value="CoA-Trfase_CaiB"/>
</dbReference>
<dbReference type="InterPro" id="IPR003673">
    <property type="entry name" value="CoA-Trfase_fam_III"/>
</dbReference>
<dbReference type="InterPro" id="IPR044855">
    <property type="entry name" value="CoA-Trfase_III_dom3_sf"/>
</dbReference>
<dbReference type="InterPro" id="IPR023606">
    <property type="entry name" value="CoA-Trfase_III_dom_1_sf"/>
</dbReference>
<dbReference type="NCBIfam" id="NF002914">
    <property type="entry name" value="PRK03525.1"/>
    <property type="match status" value="1"/>
</dbReference>
<dbReference type="PANTHER" id="PTHR48228:SF6">
    <property type="entry name" value="L-CARNITINE COA-TRANSFERASE"/>
    <property type="match status" value="1"/>
</dbReference>
<dbReference type="PANTHER" id="PTHR48228">
    <property type="entry name" value="SUCCINYL-COA--D-CITRAMALATE COA-TRANSFERASE"/>
    <property type="match status" value="1"/>
</dbReference>
<dbReference type="Pfam" id="PF02515">
    <property type="entry name" value="CoA_transf_3"/>
    <property type="match status" value="1"/>
</dbReference>
<dbReference type="SUPFAM" id="SSF89796">
    <property type="entry name" value="CoA-transferase family III (CaiB/BaiF)"/>
    <property type="match status" value="1"/>
</dbReference>
<protein>
    <recommendedName>
        <fullName evidence="1">L-carnitine CoA-transferase</fullName>
        <ecNumber evidence="1">2.8.3.21</ecNumber>
    </recommendedName>
    <alternativeName>
        <fullName evidence="1">Crotonobetainyl-CoA:carnitine CoA-transferase</fullName>
    </alternativeName>
</protein>
<comment type="function">
    <text evidence="1">Catalyzes the reversible transfer of the CoA moiety from gamma-butyrobetainyl-CoA to L-carnitine to generate L-carnitinyl-CoA and gamma-butyrobetaine. Is also able to catalyze the reversible transfer of the CoA moiety from gamma-butyrobetainyl-CoA or L-carnitinyl-CoA to crotonobetaine to generate crotonobetainyl-CoA.</text>
</comment>
<comment type="catalytic activity">
    <reaction evidence="1">
        <text>crotonobetainyl-CoA + (R)-carnitine = crotonobetaine + (R)-carnitinyl-CoA</text>
        <dbReference type="Rhea" id="RHEA:28526"/>
        <dbReference type="ChEBI" id="CHEBI:16347"/>
        <dbReference type="ChEBI" id="CHEBI:17237"/>
        <dbReference type="ChEBI" id="CHEBI:60932"/>
        <dbReference type="ChEBI" id="CHEBI:60933"/>
        <dbReference type="EC" id="2.8.3.21"/>
    </reaction>
</comment>
<comment type="catalytic activity">
    <reaction evidence="1">
        <text>4-(trimethylamino)butanoyl-CoA + (R)-carnitine = (R)-carnitinyl-CoA + 4-(trimethylamino)butanoate</text>
        <dbReference type="Rhea" id="RHEA:28418"/>
        <dbReference type="ChEBI" id="CHEBI:16244"/>
        <dbReference type="ChEBI" id="CHEBI:16347"/>
        <dbReference type="ChEBI" id="CHEBI:60932"/>
        <dbReference type="ChEBI" id="CHEBI:61513"/>
        <dbReference type="EC" id="2.8.3.21"/>
    </reaction>
</comment>
<comment type="pathway">
    <text evidence="1">Amine and polyamine metabolism; carnitine metabolism.</text>
</comment>
<comment type="subunit">
    <text evidence="1">Homodimer.</text>
</comment>
<comment type="subcellular location">
    <subcellularLocation>
        <location evidence="1">Cytoplasm</location>
    </subcellularLocation>
</comment>
<comment type="similarity">
    <text evidence="1">Belongs to the CoA-transferase III family. CaiB subfamily.</text>
</comment>
<gene>
    <name evidence="1" type="primary">caiB</name>
    <name type="ordered locus">ECP_0038</name>
</gene>
<proteinExistence type="inferred from homology"/>